<accession>A9WPV3</accession>
<gene>
    <name evidence="1" type="primary">fluC</name>
    <name evidence="1" type="synonym">crcB</name>
    <name type="ordered locus">RSal33209_1373</name>
</gene>
<reference key="1">
    <citation type="journal article" date="2008" name="J. Bacteriol.">
        <title>Genome sequence of the fish pathogen Renibacterium salmoninarum suggests reductive evolution away from an environmental Arthrobacter ancestor.</title>
        <authorList>
            <person name="Wiens G.D."/>
            <person name="Rockey D.D."/>
            <person name="Wu Z."/>
            <person name="Chang J."/>
            <person name="Levy R."/>
            <person name="Crane S."/>
            <person name="Chen D.S."/>
            <person name="Capri G.R."/>
            <person name="Burnett J.R."/>
            <person name="Sudheesh P.S."/>
            <person name="Schipma M.J."/>
            <person name="Burd H."/>
            <person name="Bhattacharyya A."/>
            <person name="Rhodes L.D."/>
            <person name="Kaul R."/>
            <person name="Strom M.S."/>
        </authorList>
    </citation>
    <scope>NUCLEOTIDE SEQUENCE [LARGE SCALE GENOMIC DNA]</scope>
    <source>
        <strain>ATCC 33209 / DSM 20767 / JCM 11484 / NBRC 15589 / NCIMB 2235</strain>
    </source>
</reference>
<comment type="function">
    <text evidence="1">Fluoride-specific ion channel. Important for reducing fluoride concentration in the cell, thus reducing its toxicity.</text>
</comment>
<comment type="catalytic activity">
    <reaction evidence="1">
        <text>fluoride(in) = fluoride(out)</text>
        <dbReference type="Rhea" id="RHEA:76159"/>
        <dbReference type="ChEBI" id="CHEBI:17051"/>
    </reaction>
    <physiologicalReaction direction="left-to-right" evidence="1">
        <dbReference type="Rhea" id="RHEA:76160"/>
    </physiologicalReaction>
</comment>
<comment type="activity regulation">
    <text evidence="1">Na(+) is not transported, but it plays an essential structural role and its presence is essential for fluoride channel function.</text>
</comment>
<comment type="subcellular location">
    <subcellularLocation>
        <location evidence="1">Cell membrane</location>
        <topology evidence="1">Multi-pass membrane protein</topology>
    </subcellularLocation>
</comment>
<comment type="similarity">
    <text evidence="1">Belongs to the fluoride channel Fluc/FEX (TC 1.A.43) family.</text>
</comment>
<sequence length="126" mass="12969">MIVIFVGLAGVLGALMRFGLDSFFAQRGRFAHGQAHHFPLATLSVNVLGSFIIGLAGGFASHAELSPDWHSAISIGIAGGLTTFSSFAVATVSLWQLGNKFSAMVNIGLNLVLGLGAAWLGLSLAA</sequence>
<name>FLUC_RENSM</name>
<evidence type="ECO:0000255" key="1">
    <source>
        <dbReference type="HAMAP-Rule" id="MF_00454"/>
    </source>
</evidence>
<proteinExistence type="inferred from homology"/>
<protein>
    <recommendedName>
        <fullName evidence="1">Fluoride-specific ion channel FluC</fullName>
    </recommendedName>
</protein>
<feature type="chain" id="PRO_1000135326" description="Fluoride-specific ion channel FluC">
    <location>
        <begin position="1"/>
        <end position="126"/>
    </location>
</feature>
<feature type="transmembrane region" description="Helical" evidence="1">
    <location>
        <begin position="1"/>
        <end position="21"/>
    </location>
</feature>
<feature type="transmembrane region" description="Helical" evidence="1">
    <location>
        <begin position="40"/>
        <end position="60"/>
    </location>
</feature>
<feature type="transmembrane region" description="Helical" evidence="1">
    <location>
        <begin position="72"/>
        <end position="92"/>
    </location>
</feature>
<feature type="transmembrane region" description="Helical" evidence="1">
    <location>
        <begin position="104"/>
        <end position="124"/>
    </location>
</feature>
<feature type="binding site" evidence="1">
    <location>
        <position position="79"/>
    </location>
    <ligand>
        <name>Na(+)</name>
        <dbReference type="ChEBI" id="CHEBI:29101"/>
        <note>structural</note>
    </ligand>
</feature>
<feature type="binding site" evidence="1">
    <location>
        <position position="82"/>
    </location>
    <ligand>
        <name>Na(+)</name>
        <dbReference type="ChEBI" id="CHEBI:29101"/>
        <note>structural</note>
    </ligand>
</feature>
<organism>
    <name type="scientific">Renibacterium salmoninarum (strain ATCC 33209 / DSM 20767 / JCM 11484 / NBRC 15589 / NCIMB 2235)</name>
    <dbReference type="NCBI Taxonomy" id="288705"/>
    <lineage>
        <taxon>Bacteria</taxon>
        <taxon>Bacillati</taxon>
        <taxon>Actinomycetota</taxon>
        <taxon>Actinomycetes</taxon>
        <taxon>Micrococcales</taxon>
        <taxon>Micrococcaceae</taxon>
        <taxon>Renibacterium</taxon>
    </lineage>
</organism>
<keyword id="KW-1003">Cell membrane</keyword>
<keyword id="KW-0407">Ion channel</keyword>
<keyword id="KW-0406">Ion transport</keyword>
<keyword id="KW-0472">Membrane</keyword>
<keyword id="KW-0479">Metal-binding</keyword>
<keyword id="KW-1185">Reference proteome</keyword>
<keyword id="KW-0915">Sodium</keyword>
<keyword id="KW-0812">Transmembrane</keyword>
<keyword id="KW-1133">Transmembrane helix</keyword>
<keyword id="KW-0813">Transport</keyword>
<dbReference type="EMBL" id="CP000910">
    <property type="protein sequence ID" value="ABY23110.1"/>
    <property type="molecule type" value="Genomic_DNA"/>
</dbReference>
<dbReference type="RefSeq" id="WP_012244791.1">
    <property type="nucleotide sequence ID" value="NC_010168.1"/>
</dbReference>
<dbReference type="SMR" id="A9WPV3"/>
<dbReference type="STRING" id="288705.RSal33209_1373"/>
<dbReference type="KEGG" id="rsa:RSal33209_1373"/>
<dbReference type="eggNOG" id="COG0239">
    <property type="taxonomic scope" value="Bacteria"/>
</dbReference>
<dbReference type="HOGENOM" id="CLU_114342_3_0_11"/>
<dbReference type="Proteomes" id="UP000002007">
    <property type="component" value="Chromosome"/>
</dbReference>
<dbReference type="GO" id="GO:0005886">
    <property type="term" value="C:plasma membrane"/>
    <property type="evidence" value="ECO:0007669"/>
    <property type="project" value="UniProtKB-SubCell"/>
</dbReference>
<dbReference type="GO" id="GO:0062054">
    <property type="term" value="F:fluoride channel activity"/>
    <property type="evidence" value="ECO:0007669"/>
    <property type="project" value="UniProtKB-UniRule"/>
</dbReference>
<dbReference type="GO" id="GO:0046872">
    <property type="term" value="F:metal ion binding"/>
    <property type="evidence" value="ECO:0007669"/>
    <property type="project" value="UniProtKB-KW"/>
</dbReference>
<dbReference type="GO" id="GO:0140114">
    <property type="term" value="P:cellular detoxification of fluoride"/>
    <property type="evidence" value="ECO:0007669"/>
    <property type="project" value="UniProtKB-UniRule"/>
</dbReference>
<dbReference type="HAMAP" id="MF_00454">
    <property type="entry name" value="FluC"/>
    <property type="match status" value="1"/>
</dbReference>
<dbReference type="InterPro" id="IPR003691">
    <property type="entry name" value="FluC"/>
</dbReference>
<dbReference type="NCBIfam" id="TIGR00494">
    <property type="entry name" value="crcB"/>
    <property type="match status" value="1"/>
</dbReference>
<dbReference type="PANTHER" id="PTHR28259">
    <property type="entry name" value="FLUORIDE EXPORT PROTEIN 1-RELATED"/>
    <property type="match status" value="1"/>
</dbReference>
<dbReference type="PANTHER" id="PTHR28259:SF1">
    <property type="entry name" value="FLUORIDE EXPORT PROTEIN 1-RELATED"/>
    <property type="match status" value="1"/>
</dbReference>
<dbReference type="Pfam" id="PF02537">
    <property type="entry name" value="CRCB"/>
    <property type="match status" value="1"/>
</dbReference>